<name>TXO1A_ETHRU</name>
<protein>
    <recommendedName>
        <fullName evidence="2">U-scoloptoxin(24)-Er1a</fullName>
        <shortName evidence="2">U-SLPTX(24)-Er1a</shortName>
    </recommendedName>
</protein>
<dbReference type="GO" id="GO:0005576">
    <property type="term" value="C:extracellular region"/>
    <property type="evidence" value="ECO:0007669"/>
    <property type="project" value="UniProtKB-SubCell"/>
</dbReference>
<dbReference type="GO" id="GO:0090729">
    <property type="term" value="F:toxin activity"/>
    <property type="evidence" value="ECO:0007669"/>
    <property type="project" value="UniProtKB-KW"/>
</dbReference>
<keyword id="KW-1015">Disulfide bond</keyword>
<keyword id="KW-0964">Secreted</keyword>
<keyword id="KW-0732">Signal</keyword>
<keyword id="KW-0800">Toxin</keyword>
<organism>
    <name type="scientific">Ethmostigmus rubripes</name>
    <name type="common">Giant centipede</name>
    <dbReference type="NCBI Taxonomy" id="62613"/>
    <lineage>
        <taxon>Eukaryota</taxon>
        <taxon>Metazoa</taxon>
        <taxon>Ecdysozoa</taxon>
        <taxon>Arthropoda</taxon>
        <taxon>Myriapoda</taxon>
        <taxon>Chilopoda</taxon>
        <taxon>Pleurostigmophora</taxon>
        <taxon>Scolopendromorpha</taxon>
        <taxon>Scolopendridae</taxon>
        <taxon>Ethmostigmus</taxon>
    </lineage>
</organism>
<evidence type="ECO:0000255" key="1"/>
<evidence type="ECO:0000303" key="2">
    <source>
    </source>
</evidence>
<evidence type="ECO:0000305" key="3"/>
<evidence type="ECO:0000305" key="4">
    <source>
    </source>
</evidence>
<proteinExistence type="inferred from homology"/>
<sequence length="103" mass="11712">MVKSLHCLIGIVLFLAILNAGNGFTLDRSASIERQEDSWPKISLFHGNQRKNDLKKSVSPTWNKLSRCPVYLPTKSDTIRVVQIKGYFAEKKQTIITSYCIIK</sequence>
<accession>P0DQF9</accession>
<comment type="subcellular location">
    <subcellularLocation>
        <location evidence="4">Secreted</location>
    </subcellularLocation>
</comment>
<comment type="tissue specificity">
    <text evidence="4">Expressed by the venom gland.</text>
</comment>
<comment type="PTM">
    <text evidence="3">Contains 1 disulfide bond.</text>
</comment>
<comment type="similarity">
    <text evidence="3">Belongs to the scoloptoxin-24 family.</text>
</comment>
<comment type="caution">
    <text evidence="4">All E.rubripes family members described in 'Undeheim et al., 2014' have not been imported into UniProtKB. Please, refer to this paper to access them.</text>
</comment>
<comment type="online information" name="National Center for Biotechnology Information (NCBI)">
    <link uri="https://www.ncbi.nlm.nih.gov/nuccore/GASI01000177"/>
</comment>
<feature type="signal peptide" evidence="1">
    <location>
        <begin position="1"/>
        <end position="23"/>
    </location>
</feature>
<feature type="chain" id="PRO_0000446836" description="U-scoloptoxin(24)-Er1a" evidence="3">
    <location>
        <begin position="24"/>
        <end position="103"/>
    </location>
</feature>
<reference key="1">
    <citation type="journal article" date="2014" name="Mol. Biol. Evol.">
        <title>Clawing through evolution: toxin diversification and convergence in the ancient lineage Chilopoda (centipedes).</title>
        <authorList>
            <person name="Undheim E.A."/>
            <person name="Jones A."/>
            <person name="Clauser K.R."/>
            <person name="Holland J.W."/>
            <person name="Pineda S.S."/>
            <person name="King G.F."/>
            <person name="Fry B.G."/>
        </authorList>
    </citation>
    <scope>NUCLEOTIDE SEQUENCE [MRNA]</scope>
    <scope>NOMENCLATURE</scope>
    <source>
        <tissue>Venom gland</tissue>
    </source>
</reference>